<comment type="function">
    <text evidence="1">Receptor that may play a role in the perception of bitterness and is gustducin-linked. May play a role in sensing the chemical composition of the gastrointestinal content. The activity of this receptor may stimulate alpha gustducin, mediate PLC-beta-2 activation and lead to the gating of TRPM5 (By similarity).</text>
</comment>
<comment type="interaction">
    <interactant intactId="EBI-12847034">
        <id>P59542</id>
    </interactant>
    <interactant intactId="EBI-12133176">
        <id>Q9UIQ6-2</id>
        <label>LNPEP</label>
    </interactant>
    <organismsDiffer>false</organismsDiffer>
    <experiments>3</experiments>
</comment>
<comment type="interaction">
    <interactant intactId="EBI-12847034">
        <id>P59542</id>
    </interactant>
    <interactant intactId="EBI-6163737">
        <id>Q8N4V1</id>
        <label>MMGT1</label>
    </interactant>
    <organismsDiffer>false</organismsDiffer>
    <experiments>3</experiments>
</comment>
<comment type="interaction">
    <interactant intactId="EBI-12847034">
        <id>P59542</id>
    </interactant>
    <interactant intactId="EBI-1050125">
        <id>O15173</id>
        <label>PGRMC2</label>
    </interactant>
    <organismsDiffer>false</organismsDiffer>
    <experiments>3</experiments>
</comment>
<comment type="interaction">
    <interactant intactId="EBI-12847034">
        <id>P59542</id>
    </interactant>
    <interactant intactId="EBI-3919694">
        <id>P15151</id>
        <label>PVR</label>
    </interactant>
    <organismsDiffer>false</organismsDiffer>
    <experiments>3</experiments>
</comment>
<comment type="interaction">
    <interactant intactId="EBI-12847034">
        <id>P59542</id>
    </interactant>
    <interactant intactId="EBI-8638294">
        <id>Q9NUH8</id>
        <label>TMEM14B</label>
    </interactant>
    <organismsDiffer>false</organismsDiffer>
    <experiments>3</experiments>
</comment>
<comment type="interaction">
    <interactant intactId="EBI-12847034">
        <id>P59542</id>
    </interactant>
    <interactant intactId="EBI-17684533">
        <id>Q9NRX6</id>
        <label>TMEM167B</label>
    </interactant>
    <organismsDiffer>false</organismsDiffer>
    <experiments>3</experiments>
</comment>
<comment type="interaction">
    <interactant intactId="EBI-12847034">
        <id>P59542</id>
    </interactant>
    <interactant intactId="EBI-12847032">
        <id>Q6NUM6</id>
        <label>TYW1B</label>
    </interactant>
    <organismsDiffer>false</organismsDiffer>
    <experiments>3</experiments>
</comment>
<comment type="subcellular location">
    <subcellularLocation>
        <location>Membrane</location>
        <topology>Multi-pass membrane protein</topology>
    </subcellularLocation>
</comment>
<comment type="tissue specificity">
    <text>Expressed in subsets of taste receptor cells of the tongue and exclusively in gustducin-positive cells.</text>
</comment>
<comment type="miscellaneous">
    <text>Most taste cells may be activated by a limited number of bitter compounds; individual taste cells can discriminate among bitter stimuli.</text>
</comment>
<comment type="similarity">
    <text evidence="3">Belongs to the G-protein coupled receptor T2R family.</text>
</comment>
<dbReference type="EMBL" id="AF494234">
    <property type="protein sequence ID" value="AAM19325.1"/>
    <property type="molecule type" value="Genomic_DNA"/>
</dbReference>
<dbReference type="EMBL" id="AY724939">
    <property type="protein sequence ID" value="AAU21141.1"/>
    <property type="molecule type" value="Genomic_DNA"/>
</dbReference>
<dbReference type="EMBL" id="BC101804">
    <property type="protein sequence ID" value="AAI01805.1"/>
    <property type="molecule type" value="mRNA"/>
</dbReference>
<dbReference type="EMBL" id="BC111998">
    <property type="protein sequence ID" value="AAI11999.1"/>
    <property type="molecule type" value="mRNA"/>
</dbReference>
<dbReference type="CCDS" id="CCDS8640.1"/>
<dbReference type="RefSeq" id="NP_795369.1">
    <property type="nucleotide sequence ID" value="NM_176888.2"/>
</dbReference>
<dbReference type="SMR" id="P59542"/>
<dbReference type="BioGRID" id="129249">
    <property type="interactions" value="34"/>
</dbReference>
<dbReference type="FunCoup" id="P59542">
    <property type="interactions" value="206"/>
</dbReference>
<dbReference type="IntAct" id="P59542">
    <property type="interactions" value="24"/>
</dbReference>
<dbReference type="STRING" id="9606.ENSP00000375091"/>
<dbReference type="ChEMBL" id="CHEMBL4523255"/>
<dbReference type="DrugCentral" id="P59542"/>
<dbReference type="TCDB" id="9.A.14.17.1">
    <property type="family name" value="the g-protein-coupled receptor (gpcr) family"/>
</dbReference>
<dbReference type="GlyCosmos" id="P59542">
    <property type="glycosylation" value="1 site, No reported glycans"/>
</dbReference>
<dbReference type="GlyGen" id="P59542">
    <property type="glycosylation" value="1 site"/>
</dbReference>
<dbReference type="iPTMnet" id="P59542"/>
<dbReference type="BioMuta" id="TAS2R19"/>
<dbReference type="DMDM" id="29839480"/>
<dbReference type="jPOST" id="P59542"/>
<dbReference type="PaxDb" id="9606-ENSP00000375091"/>
<dbReference type="PeptideAtlas" id="P59542"/>
<dbReference type="Antibodypedia" id="23421">
    <property type="antibodies" value="36 antibodies from 13 providers"/>
</dbReference>
<dbReference type="DNASU" id="259294"/>
<dbReference type="Ensembl" id="ENST00000390673.2">
    <property type="protein sequence ID" value="ENSP00000375091.2"/>
    <property type="gene ID" value="ENSG00000212124.2"/>
</dbReference>
<dbReference type="Ensembl" id="ENST00000573562.1">
    <property type="protein sequence ID" value="ENSP00000461533.1"/>
    <property type="gene ID" value="ENSG00000263028.1"/>
</dbReference>
<dbReference type="GeneID" id="259294"/>
<dbReference type="KEGG" id="hsa:259294"/>
<dbReference type="MANE-Select" id="ENST00000390673.2">
    <property type="protein sequence ID" value="ENSP00000375091.2"/>
    <property type="RefSeq nucleotide sequence ID" value="NM_176888.2"/>
    <property type="RefSeq protein sequence ID" value="NP_795369.1"/>
</dbReference>
<dbReference type="UCSC" id="uc010shj.3">
    <property type="organism name" value="human"/>
</dbReference>
<dbReference type="AGR" id="HGNC:19108"/>
<dbReference type="CTD" id="259294"/>
<dbReference type="DisGeNET" id="259294"/>
<dbReference type="GeneCards" id="TAS2R19"/>
<dbReference type="HGNC" id="HGNC:19108">
    <property type="gene designation" value="TAS2R19"/>
</dbReference>
<dbReference type="HPA" id="ENSG00000212124">
    <property type="expression patterns" value="Low tissue specificity"/>
</dbReference>
<dbReference type="MIM" id="613961">
    <property type="type" value="gene"/>
</dbReference>
<dbReference type="neXtProt" id="NX_P59542"/>
<dbReference type="OpenTargets" id="ENSG00000212124"/>
<dbReference type="VEuPathDB" id="HostDB:ENSG00000212124"/>
<dbReference type="eggNOG" id="ENOG502TE6U">
    <property type="taxonomic scope" value="Eukaryota"/>
</dbReference>
<dbReference type="GeneTree" id="ENSGT01100000263477"/>
<dbReference type="HOGENOM" id="CLU_072337_2_0_1"/>
<dbReference type="InParanoid" id="P59542"/>
<dbReference type="OMA" id="YERNITQ"/>
<dbReference type="OrthoDB" id="8876749at2759"/>
<dbReference type="PAN-GO" id="P59542">
    <property type="GO annotations" value="1 GO annotation based on evolutionary models"/>
</dbReference>
<dbReference type="PhylomeDB" id="P59542"/>
<dbReference type="TreeFam" id="TF335891"/>
<dbReference type="PathwayCommons" id="P59542"/>
<dbReference type="Reactome" id="R-HSA-418594">
    <property type="pathway name" value="G alpha (i) signalling events"/>
</dbReference>
<dbReference type="Reactome" id="R-HSA-420499">
    <property type="pathway name" value="Class C/3 (Metabotropic glutamate/pheromone receptors)"/>
</dbReference>
<dbReference type="SignaLink" id="P59542"/>
<dbReference type="BioGRID-ORCS" id="259294">
    <property type="hits" value="21 hits in 1069 CRISPR screens"/>
</dbReference>
<dbReference type="GeneWiki" id="TAS2R19"/>
<dbReference type="GenomeRNAi" id="259294"/>
<dbReference type="Pharos" id="P59542">
    <property type="development level" value="Tchem"/>
</dbReference>
<dbReference type="PRO" id="PR:P59542"/>
<dbReference type="Proteomes" id="UP000005640">
    <property type="component" value="Chromosome 12"/>
</dbReference>
<dbReference type="RNAct" id="P59542">
    <property type="molecule type" value="protein"/>
</dbReference>
<dbReference type="Bgee" id="ENSG00000212124">
    <property type="expression patterns" value="Expressed in male germ line stem cell (sensu Vertebrata) in testis and 102 other cell types or tissues"/>
</dbReference>
<dbReference type="GO" id="GO:0016020">
    <property type="term" value="C:membrane"/>
    <property type="evidence" value="ECO:0000314"/>
    <property type="project" value="UniProtKB"/>
</dbReference>
<dbReference type="GO" id="GO:0005886">
    <property type="term" value="C:plasma membrane"/>
    <property type="evidence" value="ECO:0000304"/>
    <property type="project" value="Reactome"/>
</dbReference>
<dbReference type="GO" id="GO:0004930">
    <property type="term" value="F:G protein-coupled receptor activity"/>
    <property type="evidence" value="ECO:0007669"/>
    <property type="project" value="UniProtKB-KW"/>
</dbReference>
<dbReference type="GO" id="GO:0050909">
    <property type="term" value="P:sensory perception of taste"/>
    <property type="evidence" value="ECO:0007669"/>
    <property type="project" value="UniProtKB-KW"/>
</dbReference>
<dbReference type="CDD" id="cd15027">
    <property type="entry name" value="7tm_TAS2R43-like"/>
    <property type="match status" value="1"/>
</dbReference>
<dbReference type="FunFam" id="1.20.1070.10:FF:000042">
    <property type="entry name" value="Taste receptor type 2 member 7"/>
    <property type="match status" value="1"/>
</dbReference>
<dbReference type="Gene3D" id="1.20.1070.10">
    <property type="entry name" value="Rhodopsin 7-helix transmembrane proteins"/>
    <property type="match status" value="1"/>
</dbReference>
<dbReference type="InterPro" id="IPR007960">
    <property type="entry name" value="TAS2R"/>
</dbReference>
<dbReference type="PANTHER" id="PTHR11394">
    <property type="entry name" value="TASTE RECEPTOR TYPE 2"/>
    <property type="match status" value="1"/>
</dbReference>
<dbReference type="PANTHER" id="PTHR11394:SF139">
    <property type="entry name" value="TASTE RECEPTOR TYPE 2 MEMBER 19-RELATED"/>
    <property type="match status" value="1"/>
</dbReference>
<dbReference type="Pfam" id="PF05296">
    <property type="entry name" value="TAS2R"/>
    <property type="match status" value="1"/>
</dbReference>
<dbReference type="SUPFAM" id="SSF81321">
    <property type="entry name" value="Family A G protein-coupled receptor-like"/>
    <property type="match status" value="1"/>
</dbReference>
<reference key="1">
    <citation type="journal article" date="2002" name="Nat. Genet.">
        <title>The human TAS2R16 receptor mediates bitter taste in response to beta-glucopyranosides.</title>
        <authorList>
            <person name="Bufe B."/>
            <person name="Hofmann T."/>
            <person name="Krautwurst D."/>
            <person name="Raguse J.-D."/>
            <person name="Meyerhof W."/>
        </authorList>
    </citation>
    <scope>NUCLEOTIDE SEQUENCE [GENOMIC DNA]</scope>
</reference>
<reference key="2">
    <citation type="journal article" date="2005" name="Mol. Biol. Evol.">
        <title>Evolution of bitter taste receptors in humans and apes.</title>
        <authorList>
            <person name="Fischer A."/>
            <person name="Gilad Y."/>
            <person name="Man O."/>
            <person name="Paeaebo S."/>
        </authorList>
    </citation>
    <scope>NUCLEOTIDE SEQUENCE [GENOMIC DNA]</scope>
</reference>
<reference key="3">
    <citation type="journal article" date="2004" name="Genome Res.">
        <title>The status, quality, and expansion of the NIH full-length cDNA project: the Mammalian Gene Collection (MGC).</title>
        <authorList>
            <consortium name="The MGC Project Team"/>
        </authorList>
    </citation>
    <scope>NUCLEOTIDE SEQUENCE [LARGE SCALE MRNA]</scope>
    <source>
        <tissue>Brain</tissue>
    </source>
</reference>
<reference key="4">
    <citation type="journal article" date="2002" name="Curr. Opin. Neurobiol.">
        <title>Receptors for bitter and sweet taste.</title>
        <authorList>
            <person name="Montmayeur J.-P."/>
            <person name="Matsunami H."/>
        </authorList>
    </citation>
    <scope>REVIEW</scope>
</reference>
<reference key="5">
    <citation type="journal article" date="2002" name="J. Biol. Chem.">
        <title>Molecular mechanisms of bitter and sweet taste transduction.</title>
        <authorList>
            <person name="Margolskee R.F."/>
        </authorList>
    </citation>
    <scope>REVIEW</scope>
</reference>
<reference key="6">
    <citation type="journal article" date="2003" name="Cell">
        <title>Coding of sweet, bitter, and umami tastes: different receptor cells sharing similar signaling pathways.</title>
        <authorList>
            <person name="Zhang Y."/>
            <person name="Hoon M.A."/>
            <person name="Chandrashekar J."/>
            <person name="Mueller K.L."/>
            <person name="Cook B."/>
            <person name="Wu D."/>
            <person name="Zuker C.S."/>
            <person name="Ryba N.J."/>
        </authorList>
    </citation>
    <scope>REVIEW</scope>
</reference>
<feature type="chain" id="PRO_0000082328" description="Taste receptor type 2 member 19">
    <location>
        <begin position="1"/>
        <end position="299"/>
    </location>
</feature>
<feature type="topological domain" description="Extracellular" evidence="2">
    <location>
        <position position="1"/>
    </location>
</feature>
<feature type="transmembrane region" description="Helical; Name=1" evidence="2">
    <location>
        <begin position="2"/>
        <end position="22"/>
    </location>
</feature>
<feature type="topological domain" description="Cytoplasmic" evidence="2">
    <location>
        <begin position="23"/>
        <end position="55"/>
    </location>
</feature>
<feature type="transmembrane region" description="Helical; Name=2" evidence="2">
    <location>
        <begin position="56"/>
        <end position="76"/>
    </location>
</feature>
<feature type="topological domain" description="Extracellular" evidence="2">
    <location>
        <begin position="77"/>
        <end position="87"/>
    </location>
</feature>
<feature type="transmembrane region" description="Helical; Name=3" evidence="2">
    <location>
        <begin position="88"/>
        <end position="108"/>
    </location>
</feature>
<feature type="topological domain" description="Cytoplasmic" evidence="2">
    <location>
        <begin position="109"/>
        <end position="127"/>
    </location>
</feature>
<feature type="transmembrane region" description="Helical; Name=4" evidence="2">
    <location>
        <begin position="128"/>
        <end position="148"/>
    </location>
</feature>
<feature type="topological domain" description="Extracellular" evidence="2">
    <location>
        <begin position="149"/>
        <end position="181"/>
    </location>
</feature>
<feature type="transmembrane region" description="Helical; Name=5" evidence="2">
    <location>
        <begin position="182"/>
        <end position="202"/>
    </location>
</feature>
<feature type="topological domain" description="Cytoplasmic" evidence="2">
    <location>
        <begin position="203"/>
        <end position="226"/>
    </location>
</feature>
<feature type="transmembrane region" description="Helical; Name=6" evidence="2">
    <location>
        <begin position="227"/>
        <end position="247"/>
    </location>
</feature>
<feature type="topological domain" description="Extracellular" evidence="2">
    <location>
        <begin position="248"/>
        <end position="259"/>
    </location>
</feature>
<feature type="transmembrane region" description="Helical; Name=7" evidence="2">
    <location>
        <begin position="260"/>
        <end position="280"/>
    </location>
</feature>
<feature type="topological domain" description="Cytoplasmic" evidence="2">
    <location>
        <begin position="281"/>
        <end position="299"/>
    </location>
</feature>
<feature type="glycosylation site" description="N-linked (GlcNAc...) asparagine" evidence="2">
    <location>
        <position position="161"/>
    </location>
</feature>
<feature type="sequence variant" id="VAR_053354" description="In dbSNP:rs12424373.">
    <original>K</original>
    <variation>Q</variation>
    <location>
        <position position="126"/>
    </location>
</feature>
<feature type="sequence variant" id="VAR_053355" description="In dbSNP:rs10772420.">
    <original>R</original>
    <variation>C</variation>
    <location>
        <position position="299"/>
    </location>
</feature>
<organism>
    <name type="scientific">Homo sapiens</name>
    <name type="common">Human</name>
    <dbReference type="NCBI Taxonomy" id="9606"/>
    <lineage>
        <taxon>Eukaryota</taxon>
        <taxon>Metazoa</taxon>
        <taxon>Chordata</taxon>
        <taxon>Craniata</taxon>
        <taxon>Vertebrata</taxon>
        <taxon>Euteleostomi</taxon>
        <taxon>Mammalia</taxon>
        <taxon>Eutheria</taxon>
        <taxon>Euarchontoglires</taxon>
        <taxon>Primates</taxon>
        <taxon>Haplorrhini</taxon>
        <taxon>Catarrhini</taxon>
        <taxon>Hominidae</taxon>
        <taxon>Homo</taxon>
    </lineage>
</organism>
<evidence type="ECO:0000250" key="1"/>
<evidence type="ECO:0000255" key="2"/>
<evidence type="ECO:0000305" key="3"/>
<sequence>MMCFLLIISSILVVFAFVLGNVANGFIALVNVIDWVNTRKISSAEQILTALVVSRIGLLWVMLFLWYATVFNSALYGLEVRIVASNAWAVTNHFSMWLAASLSIFCLLKIANFSNLISLHLKKRIKSVVLVILLGPLVFLICNLAVITMDERVWTKEYEGNVTWKIKLRNAIHLSSLTVTTLANLIPFTLSLICFLLLICSLCKHLKKMRLHSKGSQDPSTKVHIKALQTVTSFLMLFAIYFLCIITSTWNLRTQQSKLVLLLCQTVAIMYPSFHSFILIMGSRKLKQTFLSVLWQMTR</sequence>
<gene>
    <name type="primary">TAS2R19</name>
    <name type="synonym">TAS2R23</name>
    <name type="synonym">TAS2R48</name>
</gene>
<keyword id="KW-0297">G-protein coupled receptor</keyword>
<keyword id="KW-0325">Glycoprotein</keyword>
<keyword id="KW-0472">Membrane</keyword>
<keyword id="KW-0675">Receptor</keyword>
<keyword id="KW-1185">Reference proteome</keyword>
<keyword id="KW-0716">Sensory transduction</keyword>
<keyword id="KW-0919">Taste</keyword>
<keyword id="KW-0807">Transducer</keyword>
<keyword id="KW-0812">Transmembrane</keyword>
<keyword id="KW-1133">Transmembrane helix</keyword>
<proteinExistence type="evidence at protein level"/>
<protein>
    <recommendedName>
        <fullName>Taste receptor type 2 member 19</fullName>
    </recommendedName>
    <alternativeName>
        <fullName>Taste receptor type 2 member 23</fullName>
    </alternativeName>
    <alternativeName>
        <fullName>Taste receptor type 2 member 48</fullName>
        <shortName>T2R48</shortName>
    </alternativeName>
</protein>
<name>T2R19_HUMAN</name>
<accession>P59542</accession>
<accession>Q3MIJ4</accession>
<accession>Q645X8</accession>